<evidence type="ECO:0000250" key="1">
    <source>
        <dbReference type="UniProtKB" id="P05132"/>
    </source>
</evidence>
<evidence type="ECO:0000250" key="2">
    <source>
        <dbReference type="UniProtKB" id="P22694"/>
    </source>
</evidence>
<evidence type="ECO:0000250" key="3">
    <source>
        <dbReference type="UniProtKB" id="P68181"/>
    </source>
</evidence>
<evidence type="ECO:0000250" key="4">
    <source>
        <dbReference type="UniProtKB" id="P68182"/>
    </source>
</evidence>
<evidence type="ECO:0000255" key="5">
    <source>
        <dbReference type="PROSITE-ProRule" id="PRU00159"/>
    </source>
</evidence>
<evidence type="ECO:0000255" key="6">
    <source>
        <dbReference type="PROSITE-ProRule" id="PRU00618"/>
    </source>
</evidence>
<evidence type="ECO:0000255" key="7">
    <source>
        <dbReference type="PROSITE-ProRule" id="PRU10027"/>
    </source>
</evidence>
<evidence type="ECO:0000269" key="8">
    <source>
    </source>
</evidence>
<evidence type="ECO:0000269" key="9">
    <source>
    </source>
</evidence>
<evidence type="ECO:0000269" key="10">
    <source>
    </source>
</evidence>
<evidence type="ECO:0000269" key="11">
    <source>
    </source>
</evidence>
<evidence type="ECO:0000303" key="12">
    <source>
    </source>
</evidence>
<evidence type="ECO:0000305" key="13"/>
<organism>
    <name type="scientific">Bos taurus</name>
    <name type="common">Bovine</name>
    <dbReference type="NCBI Taxonomy" id="9913"/>
    <lineage>
        <taxon>Eukaryota</taxon>
        <taxon>Metazoa</taxon>
        <taxon>Chordata</taxon>
        <taxon>Craniata</taxon>
        <taxon>Vertebrata</taxon>
        <taxon>Euteleostomi</taxon>
        <taxon>Mammalia</taxon>
        <taxon>Eutheria</taxon>
        <taxon>Laurasiatheria</taxon>
        <taxon>Artiodactyla</taxon>
        <taxon>Ruminantia</taxon>
        <taxon>Pecora</taxon>
        <taxon>Bovidae</taxon>
        <taxon>Bovinae</taxon>
        <taxon>Bos</taxon>
    </lineage>
</organism>
<dbReference type="EC" id="2.7.11.11"/>
<dbReference type="EMBL" id="J02647">
    <property type="protein sequence ID" value="AAA30707.1"/>
    <property type="molecule type" value="mRNA"/>
</dbReference>
<dbReference type="EMBL" id="M60482">
    <property type="protein sequence ID" value="AAA30424.1"/>
    <property type="molecule type" value="mRNA"/>
</dbReference>
<dbReference type="PIR" id="A23716">
    <property type="entry name" value="OKBOB2"/>
</dbReference>
<dbReference type="PIR" id="A25334">
    <property type="entry name" value="OKBOB1"/>
</dbReference>
<dbReference type="RefSeq" id="NP_777010.1">
    <molecule id="P05131-1"/>
    <property type="nucleotide sequence ID" value="NM_174585.3"/>
</dbReference>
<dbReference type="RefSeq" id="XP_005204430.1">
    <property type="nucleotide sequence ID" value="XM_005204373.3"/>
</dbReference>
<dbReference type="SMR" id="P05131"/>
<dbReference type="BioGRID" id="159585">
    <property type="interactions" value="27"/>
</dbReference>
<dbReference type="FunCoup" id="P05131">
    <property type="interactions" value="2556"/>
</dbReference>
<dbReference type="IntAct" id="P05131">
    <property type="interactions" value="27"/>
</dbReference>
<dbReference type="STRING" id="9913.ENSBTAP00000046803"/>
<dbReference type="ChEMBL" id="CHEMBL2111446"/>
<dbReference type="DrugCentral" id="P05131"/>
<dbReference type="iPTMnet" id="P05131"/>
<dbReference type="PaxDb" id="9913-ENSBTAP00000046803"/>
<dbReference type="GeneID" id="282323"/>
<dbReference type="KEGG" id="bta:282323"/>
<dbReference type="CTD" id="5567"/>
<dbReference type="eggNOG" id="KOG0616">
    <property type="taxonomic scope" value="Eukaryota"/>
</dbReference>
<dbReference type="HOGENOM" id="CLU_000288_63_5_1"/>
<dbReference type="InParanoid" id="P05131"/>
<dbReference type="OrthoDB" id="2156623at2759"/>
<dbReference type="TreeFam" id="TF313399"/>
<dbReference type="BRENDA" id="2.7.11.11">
    <property type="organism ID" value="908"/>
</dbReference>
<dbReference type="Proteomes" id="UP000009136">
    <property type="component" value="Unplaced"/>
</dbReference>
<dbReference type="GO" id="GO:0005952">
    <property type="term" value="C:cAMP-dependent protein kinase complex"/>
    <property type="evidence" value="ECO:0000318"/>
    <property type="project" value="GO_Central"/>
</dbReference>
<dbReference type="GO" id="GO:0005829">
    <property type="term" value="C:cytosol"/>
    <property type="evidence" value="ECO:0000318"/>
    <property type="project" value="GO_Central"/>
</dbReference>
<dbReference type="GO" id="GO:0005634">
    <property type="term" value="C:nucleus"/>
    <property type="evidence" value="ECO:0000318"/>
    <property type="project" value="GO_Central"/>
</dbReference>
<dbReference type="GO" id="GO:0005886">
    <property type="term" value="C:plasma membrane"/>
    <property type="evidence" value="ECO:0007669"/>
    <property type="project" value="UniProtKB-SubCell"/>
</dbReference>
<dbReference type="GO" id="GO:0005524">
    <property type="term" value="F:ATP binding"/>
    <property type="evidence" value="ECO:0007669"/>
    <property type="project" value="UniProtKB-KW"/>
</dbReference>
<dbReference type="GO" id="GO:0004691">
    <property type="term" value="F:cAMP-dependent protein kinase activity"/>
    <property type="evidence" value="ECO:0000250"/>
    <property type="project" value="UniProtKB"/>
</dbReference>
<dbReference type="GO" id="GO:0106310">
    <property type="term" value="F:protein serine kinase activity"/>
    <property type="evidence" value="ECO:0007669"/>
    <property type="project" value="RHEA"/>
</dbReference>
<dbReference type="GO" id="GO:1904262">
    <property type="term" value="P:negative regulation of TORC1 signaling"/>
    <property type="evidence" value="ECO:0000250"/>
    <property type="project" value="UniProtKB"/>
</dbReference>
<dbReference type="GO" id="GO:0006468">
    <property type="term" value="P:protein phosphorylation"/>
    <property type="evidence" value="ECO:0000250"/>
    <property type="project" value="UniProtKB"/>
</dbReference>
<dbReference type="GO" id="GO:0007165">
    <property type="term" value="P:signal transduction"/>
    <property type="evidence" value="ECO:0000318"/>
    <property type="project" value="GO_Central"/>
</dbReference>
<dbReference type="CDD" id="cd14209">
    <property type="entry name" value="STKc_PKA"/>
    <property type="match status" value="1"/>
</dbReference>
<dbReference type="FunFam" id="3.30.200.20:FF:000005">
    <property type="entry name" value="cAMP-dependent protein kinase catalytic subunit"/>
    <property type="match status" value="1"/>
</dbReference>
<dbReference type="FunFam" id="1.10.510.10:FF:000005">
    <property type="entry name" value="cAMP-dependent protein kinase catalytic subunit alpha"/>
    <property type="match status" value="1"/>
</dbReference>
<dbReference type="Gene3D" id="3.30.200.20">
    <property type="entry name" value="Phosphorylase Kinase, domain 1"/>
    <property type="match status" value="1"/>
</dbReference>
<dbReference type="Gene3D" id="1.10.510.10">
    <property type="entry name" value="Transferase(Phosphotransferase) domain 1"/>
    <property type="match status" value="1"/>
</dbReference>
<dbReference type="InterPro" id="IPR000961">
    <property type="entry name" value="AGC-kinase_C"/>
</dbReference>
<dbReference type="InterPro" id="IPR011009">
    <property type="entry name" value="Kinase-like_dom_sf"/>
</dbReference>
<dbReference type="InterPro" id="IPR000719">
    <property type="entry name" value="Prot_kinase_dom"/>
</dbReference>
<dbReference type="InterPro" id="IPR017441">
    <property type="entry name" value="Protein_kinase_ATP_BS"/>
</dbReference>
<dbReference type="InterPro" id="IPR008271">
    <property type="entry name" value="Ser/Thr_kinase_AS"/>
</dbReference>
<dbReference type="InterPro" id="IPR044109">
    <property type="entry name" value="STKc_PKA"/>
</dbReference>
<dbReference type="PANTHER" id="PTHR24353:SF150">
    <property type="entry name" value="CAMP-DEPENDENT PROTEIN KINASE CATALYTIC SUBUNIT BETA"/>
    <property type="match status" value="1"/>
</dbReference>
<dbReference type="PANTHER" id="PTHR24353">
    <property type="entry name" value="CYCLIC NUCLEOTIDE-DEPENDENT PROTEIN KINASE"/>
    <property type="match status" value="1"/>
</dbReference>
<dbReference type="Pfam" id="PF00069">
    <property type="entry name" value="Pkinase"/>
    <property type="match status" value="1"/>
</dbReference>
<dbReference type="SMART" id="SM00133">
    <property type="entry name" value="S_TK_X"/>
    <property type="match status" value="1"/>
</dbReference>
<dbReference type="SMART" id="SM00220">
    <property type="entry name" value="S_TKc"/>
    <property type="match status" value="1"/>
</dbReference>
<dbReference type="SUPFAM" id="SSF56112">
    <property type="entry name" value="Protein kinase-like (PK-like)"/>
    <property type="match status" value="1"/>
</dbReference>
<dbReference type="PROSITE" id="PS51285">
    <property type="entry name" value="AGC_KINASE_CTER"/>
    <property type="match status" value="1"/>
</dbReference>
<dbReference type="PROSITE" id="PS00107">
    <property type="entry name" value="PROTEIN_KINASE_ATP"/>
    <property type="match status" value="1"/>
</dbReference>
<dbReference type="PROSITE" id="PS50011">
    <property type="entry name" value="PROTEIN_KINASE_DOM"/>
    <property type="match status" value="1"/>
</dbReference>
<dbReference type="PROSITE" id="PS00108">
    <property type="entry name" value="PROTEIN_KINASE_ST"/>
    <property type="match status" value="1"/>
</dbReference>
<feature type="initiator methionine" description="Removed" evidence="11">
    <location>
        <position position="1"/>
    </location>
</feature>
<feature type="chain" id="PRO_0000086057" description="cAMP-dependent protein kinase catalytic subunit beta">
    <location>
        <begin position="2"/>
        <end position="351"/>
    </location>
</feature>
<feature type="domain" description="Protein kinase" evidence="5">
    <location>
        <begin position="44"/>
        <end position="298"/>
    </location>
</feature>
<feature type="domain" description="AGC-kinase C-terminal" evidence="6">
    <location>
        <begin position="299"/>
        <end position="351"/>
    </location>
</feature>
<feature type="active site" description="Proton acceptor" evidence="5 7">
    <location>
        <position position="167"/>
    </location>
</feature>
<feature type="binding site" evidence="5">
    <location>
        <begin position="50"/>
        <end position="58"/>
    </location>
    <ligand>
        <name>ATP</name>
        <dbReference type="ChEBI" id="CHEBI:30616"/>
    </ligand>
</feature>
<feature type="binding site" evidence="5">
    <location>
        <position position="73"/>
    </location>
    <ligand>
        <name>ATP</name>
        <dbReference type="ChEBI" id="CHEBI:30616"/>
    </ligand>
</feature>
<feature type="modified residue" description="Deamidated asparagine; partial" evidence="8 9 11">
    <location>
        <position position="3"/>
    </location>
</feature>
<feature type="modified residue" description="Phosphoserine" evidence="1">
    <location>
        <position position="11"/>
    </location>
</feature>
<feature type="modified residue" description="Phosphotyrosine" evidence="3">
    <location>
        <position position="69"/>
    </location>
</feature>
<feature type="modified residue" description="Phosphoserine" evidence="1">
    <location>
        <position position="140"/>
    </location>
</feature>
<feature type="modified residue" description="Phosphothreonine" evidence="1">
    <location>
        <position position="198"/>
    </location>
</feature>
<feature type="modified residue" description="Phosphoserine" evidence="4">
    <location>
        <position position="322"/>
    </location>
</feature>
<feature type="modified residue" description="Phosphotyrosine" evidence="1">
    <location>
        <position position="331"/>
    </location>
</feature>
<feature type="modified residue" description="Phosphoserine" evidence="4">
    <location>
        <position position="339"/>
    </location>
</feature>
<feature type="lipid moiety-binding region" description="N-myristoyl glycine" evidence="11">
    <location>
        <position position="2"/>
    </location>
</feature>
<feature type="splice variant" id="VSP_031246" description="In isoform 2." evidence="12">
    <original>MGNAATAKKGSEVESV</original>
    <variation>MAAYREVPCNQYTGTTALQKLEGFASRLFHRHSKGTAHDQKTALENDSLHFSEHTALWDRSM</variation>
    <location>
        <begin position="1"/>
        <end position="16"/>
    </location>
</feature>
<reference key="1">
    <citation type="journal article" date="1986" name="J. Biol. Chem.">
        <title>A cloned bovine cDNA encodes an alternate form of the catalytic subunit of cAMP-dependent protein kinase.</title>
        <authorList>
            <person name="Showers M.O."/>
            <person name="Maurer R.A."/>
        </authorList>
    </citation>
    <scope>NUCLEOTIDE SEQUENCE [MRNA] (ISOFORM 1)</scope>
</reference>
<reference key="2">
    <citation type="journal article" date="1991" name="J. Biol. Chem.">
        <title>Isoform C beta 2, an unusual form of the bovine catalytic subunit of cAMP-dependent protein kinase.</title>
        <authorList>
            <person name="Wiemann S."/>
            <person name="Kinzel V."/>
            <person name="Pyerin W."/>
        </authorList>
    </citation>
    <scope>NUCLEOTIDE SEQUENCE [MRNA] (ISOFORM 2)</scope>
    <scope>TISSUE SPECIFICITY</scope>
    <source>
        <tissue>Heart</tissue>
    </source>
</reference>
<reference key="3">
    <citation type="journal article" date="1998" name="Protein Sci.">
        <title>A conserved deamidation site at Asn 2 in the catalytic subunit of mammalian cAMP-dependent protein kinase detected by capillary LC-MS and tandem mass spectrometry.</title>
        <authorList>
            <person name="Jedrzejewski P.T."/>
            <person name="Girod A."/>
            <person name="Tholey A."/>
            <person name="Koenig N."/>
            <person name="Thullner S."/>
            <person name="Kinzel V."/>
            <person name="Bossemeyer D."/>
        </authorList>
    </citation>
    <scope>PROTEIN SEQUENCE OF 2-8</scope>
    <scope>MYRISTOYLATION AT GLY-2</scope>
    <scope>DEAMIDATION AT ASN-3</scope>
</reference>
<reference key="4">
    <citation type="journal article" date="2000" name="J. Cell Biol.">
        <title>Intracellular distribution of mammalian protein kinase A catalytic subunit altered by conserved Asn2 deamidation.</title>
        <authorList>
            <person name="Pepperkok R."/>
            <person name="Hotz-Wagenblatt A."/>
            <person name="Koenig N."/>
            <person name="Girod A."/>
            <person name="Bossemeyer D."/>
            <person name="Kinzel V."/>
        </authorList>
    </citation>
    <scope>DEAMIDATION AT ASN-3</scope>
    <scope>SUBCELLULAR LOCATION</scope>
</reference>
<reference key="5">
    <citation type="journal article" date="2000" name="Protein Sci.">
        <title>The amino terminus of PKA catalytic subunit- a site for introduction of posttranslational heterogeneities by deamidation: D-Asp2 and D-isoAsp2 containing isozymes.</title>
        <authorList>
            <person name="Kinzel V."/>
            <person name="Koenig N."/>
            <person name="Pipkorn R."/>
            <person name="Bossemeyer D."/>
            <person name="Lehmann W.D."/>
        </authorList>
    </citation>
    <scope>DEAMIDATION AT ASN-3</scope>
    <scope>CHARACTERIZATION OF ASP-3 ISOMERS</scope>
</reference>
<gene>
    <name type="primary">PRKACB</name>
</gene>
<proteinExistence type="evidence at protein level"/>
<keyword id="KW-0025">Alternative splicing</keyword>
<keyword id="KW-0067">ATP-binding</keyword>
<keyword id="KW-0114">cAMP</keyword>
<keyword id="KW-1003">Cell membrane</keyword>
<keyword id="KW-0963">Cytoplasm</keyword>
<keyword id="KW-0903">Direct protein sequencing</keyword>
<keyword id="KW-0418">Kinase</keyword>
<keyword id="KW-0449">Lipoprotein</keyword>
<keyword id="KW-0472">Membrane</keyword>
<keyword id="KW-0519">Myristate</keyword>
<keyword id="KW-0547">Nucleotide-binding</keyword>
<keyword id="KW-0539">Nucleus</keyword>
<keyword id="KW-0597">Phosphoprotein</keyword>
<keyword id="KW-1185">Reference proteome</keyword>
<keyword id="KW-0723">Serine/threonine-protein kinase</keyword>
<keyword id="KW-0808">Transferase</keyword>
<name>KAPCB_BOVIN</name>
<protein>
    <recommendedName>
        <fullName>cAMP-dependent protein kinase catalytic subunit beta</fullName>
        <shortName>PKA C-beta</shortName>
        <ecNumber>2.7.11.11</ecNumber>
    </recommendedName>
</protein>
<comment type="function">
    <text evidence="2">Mediates cAMP-dependent signaling triggered by receptor binding to GPCRs. PKA activation regulates diverse cellular processes such as cell proliferation, the cell cycle, differentiation and regulation of microtubule dynamics, chromatin condensation and decondensation, nuclear envelope disassembly and reassembly, as well as regulation of intracellular transport mechanisms and ion flux. Regulates the abundance of compartmentalized pools of its regulatory subunits through phosphorylation of PJA2 which binds and ubiquitinates these subunits, leading to their subsequent proteolysis. Phosphorylates GPKOW which regulates its ability to bind RNA. Acts as a negative regulator of mTORC1 by mediating phosphorylation of RPTOR.</text>
</comment>
<comment type="catalytic activity">
    <reaction>
        <text>L-seryl-[protein] + ATP = O-phospho-L-seryl-[protein] + ADP + H(+)</text>
        <dbReference type="Rhea" id="RHEA:17989"/>
        <dbReference type="Rhea" id="RHEA-COMP:9863"/>
        <dbReference type="Rhea" id="RHEA-COMP:11604"/>
        <dbReference type="ChEBI" id="CHEBI:15378"/>
        <dbReference type="ChEBI" id="CHEBI:29999"/>
        <dbReference type="ChEBI" id="CHEBI:30616"/>
        <dbReference type="ChEBI" id="CHEBI:83421"/>
        <dbReference type="ChEBI" id="CHEBI:456216"/>
        <dbReference type="EC" id="2.7.11.11"/>
    </reaction>
</comment>
<comment type="catalytic activity">
    <reaction>
        <text>L-threonyl-[protein] + ATP = O-phospho-L-threonyl-[protein] + ADP + H(+)</text>
        <dbReference type="Rhea" id="RHEA:46608"/>
        <dbReference type="Rhea" id="RHEA-COMP:11060"/>
        <dbReference type="Rhea" id="RHEA-COMP:11605"/>
        <dbReference type="ChEBI" id="CHEBI:15378"/>
        <dbReference type="ChEBI" id="CHEBI:30013"/>
        <dbReference type="ChEBI" id="CHEBI:30616"/>
        <dbReference type="ChEBI" id="CHEBI:61977"/>
        <dbReference type="ChEBI" id="CHEBI:456216"/>
        <dbReference type="EC" id="2.7.11.11"/>
    </reaction>
</comment>
<comment type="activity regulation">
    <text evidence="2">Activated by cAMP.</text>
</comment>
<comment type="subunit">
    <text evidence="1 2">A number of inactive tetrameric holoenzymes are produced by the combination of homo- or heterodimers of the different regulatory subunits associated with two catalytic subunits. cAMP causes the dissociation of the inactive holoenzyme into a dimer of regulatory subunits bound to four cAMP and two free monomeric catalytic subunits. Interacts with PRKAR1A and PRKAR2B (By similarity). The cAMP-dependent protein kinase catalytic subunit binds PJA2. Interacts with GPKOW.</text>
</comment>
<comment type="subcellular location">
    <subcellularLocation>
        <location evidence="8">Cytoplasm</location>
    </subcellularLocation>
    <subcellularLocation>
        <location evidence="2">Cell membrane</location>
    </subcellularLocation>
    <subcellularLocation>
        <location evidence="2">Membrane</location>
        <topology evidence="2">Lipid-anchor</topology>
    </subcellularLocation>
    <subcellularLocation>
        <location evidence="8">Nucleus</location>
    </subcellularLocation>
    <text evidence="8">Translocates into the nucleus (monomeric catalytic subunit). The inactive holoenzyme is found in the cytoplasm.</text>
</comment>
<comment type="alternative products">
    <event type="alternative splicing"/>
    <isoform>
        <id>P05131-1</id>
        <name>1</name>
        <name>Beta-1</name>
        <sequence type="displayed"/>
    </isoform>
    <isoform>
        <id>P05131-2</id>
        <id>P24256-1</id>
        <name>2</name>
        <name>Beta-2</name>
        <sequence type="described" ref="VSP_031246"/>
    </isoform>
    <text>N-terminal differences in alternatively spliced products could be involved in regulation such as alternative targeting.</text>
</comment>
<comment type="tissue specificity">
    <text evidence="10">Isoform 2 is mainly expressed in heart and brain.</text>
</comment>
<comment type="PTM">
    <text evidence="8 9 11">Asn-3 is deaminated to Asp in more than 25% of the proteins, giving rise to 2 major isoelectric variants, called CB and CA respectively (0.4 pH unit change). Deamidation proceeds via the so-called beta-aspartyl shift mechanism and yields either 'D-Asp-2' (major) or 'D-isoAsp-2' (minor), in addition to L-isomers. Deamidation occurs after the addition of myristate. The Asn-3 form reaches a significantly larger nuclear/cytoplasmic ratio than the 'Asp-2' form.</text>
</comment>
<comment type="similarity">
    <text evidence="13">Belongs to the protein kinase superfamily. AGC Ser/Thr protein kinase family. cAMP subfamily.</text>
</comment>
<sequence length="351" mass="40594">MGNAATAKKGSEVESVKEFLAKAKEDFLKKWENPAPNNAGLEDFERKKTLGTGSFGRVMLVKHKATEQYYAMKILDKQKVVKLKQIEHTLNEKRILQAVNFPFLVRLEYAFKDNSNLYMVMEYVPGGEMFSHLRRIGRFSEPHARFYAAQIVLTFEYLHSLDLIYRDLKPENLLIDHQGYIQVTDFGFAKRVKGRTWTLCGTPEYLAPEIILSKGYNKAVDWWALGVLIYEMAAGYPPFFADQPIQIYEKIVSGKVRFPSHFSSDLKDLLRNLLQVDLTKRFGNLKNGVSDIKTHKWFATTDWIAIYQRKVEAPFIPKFRGSGDTSNFDDYEEEDIRVSITEKCGKEFCEF</sequence>
<accession>P05131</accession>
<accession>P24256</accession>